<proteinExistence type="evidence at transcript level"/>
<feature type="chain" id="PRO_0000395111" description="Serine/arginine-rich splicing factor 12">
    <location>
        <begin position="1"/>
        <end position="266"/>
    </location>
</feature>
<feature type="region of interest" description="Disordered" evidence="2">
    <location>
        <begin position="42"/>
        <end position="266"/>
    </location>
</feature>
<feature type="compositionally biased region" description="Basic residues" evidence="2">
    <location>
        <begin position="43"/>
        <end position="62"/>
    </location>
</feature>
<feature type="compositionally biased region" description="Basic and acidic residues" evidence="2">
    <location>
        <begin position="102"/>
        <end position="114"/>
    </location>
</feature>
<feature type="compositionally biased region" description="Basic residues" evidence="2">
    <location>
        <begin position="115"/>
        <end position="127"/>
    </location>
</feature>
<feature type="compositionally biased region" description="Basic and acidic residues" evidence="2">
    <location>
        <begin position="133"/>
        <end position="144"/>
    </location>
</feature>
<feature type="compositionally biased region" description="Low complexity" evidence="2">
    <location>
        <begin position="151"/>
        <end position="166"/>
    </location>
</feature>
<feature type="compositionally biased region" description="Basic residues" evidence="2">
    <location>
        <begin position="183"/>
        <end position="194"/>
    </location>
</feature>
<feature type="compositionally biased region" description="Polar residues" evidence="2">
    <location>
        <begin position="202"/>
        <end position="212"/>
    </location>
</feature>
<feature type="compositionally biased region" description="Polar residues" evidence="2">
    <location>
        <begin position="235"/>
        <end position="244"/>
    </location>
</feature>
<feature type="compositionally biased region" description="Basic residues" evidence="2">
    <location>
        <begin position="245"/>
        <end position="266"/>
    </location>
</feature>
<feature type="sequence conflict" description="In Ref. 1; BAC32901." evidence="3" ref="1">
    <original>R</original>
    <variation>L</variation>
    <location>
        <position position="55"/>
    </location>
</feature>
<protein>
    <recommendedName>
        <fullName>Serine/arginine-rich splicing factor 12</fullName>
    </recommendedName>
    <alternativeName>
        <fullName>Splicing factor, arginine/serine-rich 13B</fullName>
    </alternativeName>
</protein>
<organism>
    <name type="scientific">Mus musculus</name>
    <name type="common">Mouse</name>
    <dbReference type="NCBI Taxonomy" id="10090"/>
    <lineage>
        <taxon>Eukaryota</taxon>
        <taxon>Metazoa</taxon>
        <taxon>Chordata</taxon>
        <taxon>Craniata</taxon>
        <taxon>Vertebrata</taxon>
        <taxon>Euteleostomi</taxon>
        <taxon>Mammalia</taxon>
        <taxon>Eutheria</taxon>
        <taxon>Euarchontoglires</taxon>
        <taxon>Glires</taxon>
        <taxon>Rodentia</taxon>
        <taxon>Myomorpha</taxon>
        <taxon>Muroidea</taxon>
        <taxon>Muridae</taxon>
        <taxon>Murinae</taxon>
        <taxon>Mus</taxon>
        <taxon>Mus</taxon>
    </lineage>
</organism>
<name>SRS12_MOUSE</name>
<sequence>MRSFSGAVWERQVSLGAPSWPAAMGDRIYSLEARAVARSVLARPRRPRAPRPRLRLRGRPGRGRGGLLGAGPREACLATPGPPTPPCSSGTSQTPPAPGQMKSKERHLCSPSDHRRSRSPSQRRSRSRSSSWGRDRRHSDSLKESRHRRSSYSQSKSRSKSLPRQSTSLRQSRTPRRNSGSRGRSRSKSLPKRSKSMEKSQSRSPQKQTGSGAKSRPHGRHCDSIARSPCKSPRAYTSSGSKTQTTKHSHLRSHSRSRSYHHKNSW</sequence>
<accession>Q8C8K3</accession>
<evidence type="ECO:0000250" key="1"/>
<evidence type="ECO:0000256" key="2">
    <source>
        <dbReference type="SAM" id="MobiDB-lite"/>
    </source>
</evidence>
<evidence type="ECO:0000305" key="3"/>
<gene>
    <name type="primary">Srsf12</name>
    <name type="synonym">Sfrs13b</name>
    <name type="synonym">Srrp</name>
    <name type="synonym">Srsf13b</name>
</gene>
<reference key="1">
    <citation type="journal article" date="2005" name="Science">
        <title>The transcriptional landscape of the mammalian genome.</title>
        <authorList>
            <person name="Carninci P."/>
            <person name="Kasukawa T."/>
            <person name="Katayama S."/>
            <person name="Gough J."/>
            <person name="Frith M.C."/>
            <person name="Maeda N."/>
            <person name="Oyama R."/>
            <person name="Ravasi T."/>
            <person name="Lenhard B."/>
            <person name="Wells C."/>
            <person name="Kodzius R."/>
            <person name="Shimokawa K."/>
            <person name="Bajic V.B."/>
            <person name="Brenner S.E."/>
            <person name="Batalov S."/>
            <person name="Forrest A.R."/>
            <person name="Zavolan M."/>
            <person name="Davis M.J."/>
            <person name="Wilming L.G."/>
            <person name="Aidinis V."/>
            <person name="Allen J.E."/>
            <person name="Ambesi-Impiombato A."/>
            <person name="Apweiler R."/>
            <person name="Aturaliya R.N."/>
            <person name="Bailey T.L."/>
            <person name="Bansal M."/>
            <person name="Baxter L."/>
            <person name="Beisel K.W."/>
            <person name="Bersano T."/>
            <person name="Bono H."/>
            <person name="Chalk A.M."/>
            <person name="Chiu K.P."/>
            <person name="Choudhary V."/>
            <person name="Christoffels A."/>
            <person name="Clutterbuck D.R."/>
            <person name="Crowe M.L."/>
            <person name="Dalla E."/>
            <person name="Dalrymple B.P."/>
            <person name="de Bono B."/>
            <person name="Della Gatta G."/>
            <person name="di Bernardo D."/>
            <person name="Down T."/>
            <person name="Engstrom P."/>
            <person name="Fagiolini M."/>
            <person name="Faulkner G."/>
            <person name="Fletcher C.F."/>
            <person name="Fukushima T."/>
            <person name="Furuno M."/>
            <person name="Futaki S."/>
            <person name="Gariboldi M."/>
            <person name="Georgii-Hemming P."/>
            <person name="Gingeras T.R."/>
            <person name="Gojobori T."/>
            <person name="Green R.E."/>
            <person name="Gustincich S."/>
            <person name="Harbers M."/>
            <person name="Hayashi Y."/>
            <person name="Hensch T.K."/>
            <person name="Hirokawa N."/>
            <person name="Hill D."/>
            <person name="Huminiecki L."/>
            <person name="Iacono M."/>
            <person name="Ikeo K."/>
            <person name="Iwama A."/>
            <person name="Ishikawa T."/>
            <person name="Jakt M."/>
            <person name="Kanapin A."/>
            <person name="Katoh M."/>
            <person name="Kawasawa Y."/>
            <person name="Kelso J."/>
            <person name="Kitamura H."/>
            <person name="Kitano H."/>
            <person name="Kollias G."/>
            <person name="Krishnan S.P."/>
            <person name="Kruger A."/>
            <person name="Kummerfeld S.K."/>
            <person name="Kurochkin I.V."/>
            <person name="Lareau L.F."/>
            <person name="Lazarevic D."/>
            <person name="Lipovich L."/>
            <person name="Liu J."/>
            <person name="Liuni S."/>
            <person name="McWilliam S."/>
            <person name="Madan Babu M."/>
            <person name="Madera M."/>
            <person name="Marchionni L."/>
            <person name="Matsuda H."/>
            <person name="Matsuzawa S."/>
            <person name="Miki H."/>
            <person name="Mignone F."/>
            <person name="Miyake S."/>
            <person name="Morris K."/>
            <person name="Mottagui-Tabar S."/>
            <person name="Mulder N."/>
            <person name="Nakano N."/>
            <person name="Nakauchi H."/>
            <person name="Ng P."/>
            <person name="Nilsson R."/>
            <person name="Nishiguchi S."/>
            <person name="Nishikawa S."/>
            <person name="Nori F."/>
            <person name="Ohara O."/>
            <person name="Okazaki Y."/>
            <person name="Orlando V."/>
            <person name="Pang K.C."/>
            <person name="Pavan W.J."/>
            <person name="Pavesi G."/>
            <person name="Pesole G."/>
            <person name="Petrovsky N."/>
            <person name="Piazza S."/>
            <person name="Reed J."/>
            <person name="Reid J.F."/>
            <person name="Ring B.Z."/>
            <person name="Ringwald M."/>
            <person name="Rost B."/>
            <person name="Ruan Y."/>
            <person name="Salzberg S.L."/>
            <person name="Sandelin A."/>
            <person name="Schneider C."/>
            <person name="Schoenbach C."/>
            <person name="Sekiguchi K."/>
            <person name="Semple C.A."/>
            <person name="Seno S."/>
            <person name="Sessa L."/>
            <person name="Sheng Y."/>
            <person name="Shibata Y."/>
            <person name="Shimada H."/>
            <person name="Shimada K."/>
            <person name="Silva D."/>
            <person name="Sinclair B."/>
            <person name="Sperling S."/>
            <person name="Stupka E."/>
            <person name="Sugiura K."/>
            <person name="Sultana R."/>
            <person name="Takenaka Y."/>
            <person name="Taki K."/>
            <person name="Tammoja K."/>
            <person name="Tan S.L."/>
            <person name="Tang S."/>
            <person name="Taylor M.S."/>
            <person name="Tegner J."/>
            <person name="Teichmann S.A."/>
            <person name="Ueda H.R."/>
            <person name="van Nimwegen E."/>
            <person name="Verardo R."/>
            <person name="Wei C.L."/>
            <person name="Yagi K."/>
            <person name="Yamanishi H."/>
            <person name="Zabarovsky E."/>
            <person name="Zhu S."/>
            <person name="Zimmer A."/>
            <person name="Hide W."/>
            <person name="Bult C."/>
            <person name="Grimmond S.M."/>
            <person name="Teasdale R.D."/>
            <person name="Liu E.T."/>
            <person name="Brusic V."/>
            <person name="Quackenbush J."/>
            <person name="Wahlestedt C."/>
            <person name="Mattick J.S."/>
            <person name="Hume D.A."/>
            <person name="Kai C."/>
            <person name="Sasaki D."/>
            <person name="Tomaru Y."/>
            <person name="Fukuda S."/>
            <person name="Kanamori-Katayama M."/>
            <person name="Suzuki M."/>
            <person name="Aoki J."/>
            <person name="Arakawa T."/>
            <person name="Iida J."/>
            <person name="Imamura K."/>
            <person name="Itoh M."/>
            <person name="Kato T."/>
            <person name="Kawaji H."/>
            <person name="Kawagashira N."/>
            <person name="Kawashima T."/>
            <person name="Kojima M."/>
            <person name="Kondo S."/>
            <person name="Konno H."/>
            <person name="Nakano K."/>
            <person name="Ninomiya N."/>
            <person name="Nishio T."/>
            <person name="Okada M."/>
            <person name="Plessy C."/>
            <person name="Shibata K."/>
            <person name="Shiraki T."/>
            <person name="Suzuki S."/>
            <person name="Tagami M."/>
            <person name="Waki K."/>
            <person name="Watahiki A."/>
            <person name="Okamura-Oho Y."/>
            <person name="Suzuki H."/>
            <person name="Kawai J."/>
            <person name="Hayashizaki Y."/>
        </authorList>
    </citation>
    <scope>NUCLEOTIDE SEQUENCE [LARGE SCALE MRNA]</scope>
    <source>
        <strain>C57BL/6J</strain>
        <tissue>Medulla oblongata</tissue>
    </source>
</reference>
<reference key="2">
    <citation type="journal article" date="2009" name="PLoS Biol.">
        <title>Lineage-specific biology revealed by a finished genome assembly of the mouse.</title>
        <authorList>
            <person name="Church D.M."/>
            <person name="Goodstadt L."/>
            <person name="Hillier L.W."/>
            <person name="Zody M.C."/>
            <person name="Goldstein S."/>
            <person name="She X."/>
            <person name="Bult C.J."/>
            <person name="Agarwala R."/>
            <person name="Cherry J.L."/>
            <person name="DiCuccio M."/>
            <person name="Hlavina W."/>
            <person name="Kapustin Y."/>
            <person name="Meric P."/>
            <person name="Maglott D."/>
            <person name="Birtle Z."/>
            <person name="Marques A.C."/>
            <person name="Graves T."/>
            <person name="Zhou S."/>
            <person name="Teague B."/>
            <person name="Potamousis K."/>
            <person name="Churas C."/>
            <person name="Place M."/>
            <person name="Herschleb J."/>
            <person name="Runnheim R."/>
            <person name="Forrest D."/>
            <person name="Amos-Landgraf J."/>
            <person name="Schwartz D.C."/>
            <person name="Cheng Z."/>
            <person name="Lindblad-Toh K."/>
            <person name="Eichler E.E."/>
            <person name="Ponting C.P."/>
        </authorList>
    </citation>
    <scope>NUCLEOTIDE SEQUENCE [LARGE SCALE GENOMIC DNA]</scope>
    <source>
        <strain>C57BL/6J</strain>
    </source>
</reference>
<keyword id="KW-0507">mRNA processing</keyword>
<keyword id="KW-0508">mRNA splicing</keyword>
<keyword id="KW-0539">Nucleus</keyword>
<keyword id="KW-1185">Reference proteome</keyword>
<dbReference type="EMBL" id="AK046869">
    <property type="protein sequence ID" value="BAC32901.1"/>
    <property type="molecule type" value="mRNA"/>
</dbReference>
<dbReference type="EMBL" id="AL670464">
    <property type="status" value="NOT_ANNOTATED_CDS"/>
    <property type="molecule type" value="Genomic_DNA"/>
</dbReference>
<dbReference type="CCDS" id="CCDS18022.1"/>
<dbReference type="RefSeq" id="NP_808442.2">
    <property type="nucleotide sequence ID" value="NM_177774.5"/>
</dbReference>
<dbReference type="FunCoup" id="Q8C8K3">
    <property type="interactions" value="39"/>
</dbReference>
<dbReference type="STRING" id="10090.ENSMUSP00000067939"/>
<dbReference type="GlyGen" id="Q8C8K3">
    <property type="glycosylation" value="2 sites"/>
</dbReference>
<dbReference type="iPTMnet" id="Q8C8K3"/>
<dbReference type="PhosphoSitePlus" id="Q8C8K3"/>
<dbReference type="PaxDb" id="10090-ENSMUSP00000067939"/>
<dbReference type="Antibodypedia" id="54701">
    <property type="antibodies" value="26 antibodies from 12 providers"/>
</dbReference>
<dbReference type="DNASU" id="272009"/>
<dbReference type="Ensembl" id="ENSMUST00000067864.8">
    <property type="protein sequence ID" value="ENSMUSP00000067939.2"/>
    <property type="gene ID" value="ENSMUSG00000054679.9"/>
</dbReference>
<dbReference type="GeneID" id="272009"/>
<dbReference type="KEGG" id="mmu:272009"/>
<dbReference type="UCSC" id="uc008sft.1">
    <property type="organism name" value="mouse"/>
</dbReference>
<dbReference type="AGR" id="MGI:2661424"/>
<dbReference type="CTD" id="135295"/>
<dbReference type="MGI" id="MGI:2661424">
    <property type="gene designation" value="Srsf12"/>
</dbReference>
<dbReference type="VEuPathDB" id="HostDB:ENSMUSG00000054679"/>
<dbReference type="eggNOG" id="KOG0118">
    <property type="taxonomic scope" value="Eukaryota"/>
</dbReference>
<dbReference type="GeneTree" id="ENSGT00940000160519"/>
<dbReference type="HOGENOM" id="CLU_1045709_0_0_1"/>
<dbReference type="InParanoid" id="Q8C8K3"/>
<dbReference type="OMA" id="LKINMPG"/>
<dbReference type="OrthoDB" id="439808at2759"/>
<dbReference type="PhylomeDB" id="Q8C8K3"/>
<dbReference type="BioGRID-ORCS" id="272009">
    <property type="hits" value="2 hits in 46 CRISPR screens"/>
</dbReference>
<dbReference type="PRO" id="PR:Q8C8K3"/>
<dbReference type="Proteomes" id="UP000000589">
    <property type="component" value="Chromosome 4"/>
</dbReference>
<dbReference type="RNAct" id="Q8C8K3">
    <property type="molecule type" value="protein"/>
</dbReference>
<dbReference type="Bgee" id="ENSMUSG00000054679">
    <property type="expression patterns" value="Expressed in embryonic brain and 132 other cell types or tissues"/>
</dbReference>
<dbReference type="ExpressionAtlas" id="Q8C8K3">
    <property type="expression patterns" value="baseline and differential"/>
</dbReference>
<dbReference type="GO" id="GO:0005634">
    <property type="term" value="C:nucleus"/>
    <property type="evidence" value="ECO:0007669"/>
    <property type="project" value="UniProtKB-SubCell"/>
</dbReference>
<dbReference type="GO" id="GO:0000395">
    <property type="term" value="P:mRNA 5'-splice site recognition"/>
    <property type="evidence" value="ECO:0007669"/>
    <property type="project" value="Ensembl"/>
</dbReference>
<dbReference type="GO" id="GO:0000381">
    <property type="term" value="P:regulation of alternative mRNA splicing, via spliceosome"/>
    <property type="evidence" value="ECO:0007669"/>
    <property type="project" value="Ensembl"/>
</dbReference>
<comment type="function">
    <text evidence="1">Splicing factor that seems to antagonize SR proteins in pre-mRNA splicing regulation.</text>
</comment>
<comment type="subcellular location">
    <subcellularLocation>
        <location evidence="1">Nucleus</location>
    </subcellularLocation>
</comment>
<comment type="similarity">
    <text evidence="3">Belongs to the splicing factor SR family.</text>
</comment>
<comment type="caution">
    <text evidence="3">In contrast to the human ortholog, lacks the RRM (RNA recognition motif) domain at the N-terminus.</text>
</comment>